<keyword id="KW-0963">Cytoplasm</keyword>
<keyword id="KW-0460">Magnesium</keyword>
<keyword id="KW-0479">Metal-binding</keyword>
<keyword id="KW-0566">Pantothenate biosynthesis</keyword>
<keyword id="KW-1185">Reference proteome</keyword>
<keyword id="KW-0808">Transferase</keyword>
<gene>
    <name evidence="1" type="primary">panB</name>
    <name type="ordered locus">lpg2661</name>
</gene>
<dbReference type="EC" id="2.1.2.11" evidence="1"/>
<dbReference type="EMBL" id="AE017354">
    <property type="protein sequence ID" value="AAU28719.1"/>
    <property type="status" value="ALT_INIT"/>
    <property type="molecule type" value="Genomic_DNA"/>
</dbReference>
<dbReference type="RefSeq" id="WP_015443983.1">
    <property type="nucleotide sequence ID" value="NC_002942.5"/>
</dbReference>
<dbReference type="RefSeq" id="YP_096666.1">
    <property type="nucleotide sequence ID" value="NC_002942.5"/>
</dbReference>
<dbReference type="SMR" id="Q5ZS58"/>
<dbReference type="STRING" id="272624.lpg2661"/>
<dbReference type="PaxDb" id="272624-lpg2661"/>
<dbReference type="GeneID" id="57036661"/>
<dbReference type="KEGG" id="lpn:lpg2661"/>
<dbReference type="PATRIC" id="fig|272624.6.peg.2841"/>
<dbReference type="eggNOG" id="COG0413">
    <property type="taxonomic scope" value="Bacteria"/>
</dbReference>
<dbReference type="HOGENOM" id="CLU_036645_1_0_6"/>
<dbReference type="OrthoDB" id="9781789at2"/>
<dbReference type="UniPathway" id="UPA00028">
    <property type="reaction ID" value="UER00003"/>
</dbReference>
<dbReference type="Proteomes" id="UP000000609">
    <property type="component" value="Chromosome"/>
</dbReference>
<dbReference type="GO" id="GO:0005737">
    <property type="term" value="C:cytoplasm"/>
    <property type="evidence" value="ECO:0007669"/>
    <property type="project" value="UniProtKB-SubCell"/>
</dbReference>
<dbReference type="GO" id="GO:0003864">
    <property type="term" value="F:3-methyl-2-oxobutanoate hydroxymethyltransferase activity"/>
    <property type="evidence" value="ECO:0007669"/>
    <property type="project" value="UniProtKB-UniRule"/>
</dbReference>
<dbReference type="GO" id="GO:0000287">
    <property type="term" value="F:magnesium ion binding"/>
    <property type="evidence" value="ECO:0007669"/>
    <property type="project" value="TreeGrafter"/>
</dbReference>
<dbReference type="GO" id="GO:0015940">
    <property type="term" value="P:pantothenate biosynthetic process"/>
    <property type="evidence" value="ECO:0007669"/>
    <property type="project" value="UniProtKB-UniRule"/>
</dbReference>
<dbReference type="CDD" id="cd06557">
    <property type="entry name" value="KPHMT-like"/>
    <property type="match status" value="1"/>
</dbReference>
<dbReference type="FunFam" id="3.20.20.60:FF:000003">
    <property type="entry name" value="3-methyl-2-oxobutanoate hydroxymethyltransferase"/>
    <property type="match status" value="1"/>
</dbReference>
<dbReference type="Gene3D" id="3.20.20.60">
    <property type="entry name" value="Phosphoenolpyruvate-binding domains"/>
    <property type="match status" value="1"/>
</dbReference>
<dbReference type="HAMAP" id="MF_00156">
    <property type="entry name" value="PanB"/>
    <property type="match status" value="1"/>
</dbReference>
<dbReference type="InterPro" id="IPR003700">
    <property type="entry name" value="Pantoate_hydroxy_MeTrfase"/>
</dbReference>
<dbReference type="InterPro" id="IPR015813">
    <property type="entry name" value="Pyrv/PenolPyrv_kinase-like_dom"/>
</dbReference>
<dbReference type="InterPro" id="IPR040442">
    <property type="entry name" value="Pyrv_kinase-like_dom_sf"/>
</dbReference>
<dbReference type="NCBIfam" id="TIGR00222">
    <property type="entry name" value="panB"/>
    <property type="match status" value="1"/>
</dbReference>
<dbReference type="NCBIfam" id="NF001452">
    <property type="entry name" value="PRK00311.1"/>
    <property type="match status" value="1"/>
</dbReference>
<dbReference type="PANTHER" id="PTHR20881">
    <property type="entry name" value="3-METHYL-2-OXOBUTANOATE HYDROXYMETHYLTRANSFERASE"/>
    <property type="match status" value="1"/>
</dbReference>
<dbReference type="PANTHER" id="PTHR20881:SF0">
    <property type="entry name" value="3-METHYL-2-OXOBUTANOATE HYDROXYMETHYLTRANSFERASE"/>
    <property type="match status" value="1"/>
</dbReference>
<dbReference type="Pfam" id="PF02548">
    <property type="entry name" value="Pantoate_transf"/>
    <property type="match status" value="1"/>
</dbReference>
<dbReference type="PIRSF" id="PIRSF000388">
    <property type="entry name" value="Pantoate_hydroxy_MeTrfase"/>
    <property type="match status" value="1"/>
</dbReference>
<dbReference type="SUPFAM" id="SSF51621">
    <property type="entry name" value="Phosphoenolpyruvate/pyruvate domain"/>
    <property type="match status" value="1"/>
</dbReference>
<reference key="1">
    <citation type="journal article" date="2004" name="Science">
        <title>The genomic sequence of the accidental pathogen Legionella pneumophila.</title>
        <authorList>
            <person name="Chien M."/>
            <person name="Morozova I."/>
            <person name="Shi S."/>
            <person name="Sheng H."/>
            <person name="Chen J."/>
            <person name="Gomez S.M."/>
            <person name="Asamani G."/>
            <person name="Hill K."/>
            <person name="Nuara J."/>
            <person name="Feder M."/>
            <person name="Rineer J."/>
            <person name="Greenberg J.J."/>
            <person name="Steshenko V."/>
            <person name="Park S.H."/>
            <person name="Zhao B."/>
            <person name="Teplitskaya E."/>
            <person name="Edwards J.R."/>
            <person name="Pampou S."/>
            <person name="Georghiou A."/>
            <person name="Chou I.-C."/>
            <person name="Iannuccilli W."/>
            <person name="Ulz M.E."/>
            <person name="Kim D.H."/>
            <person name="Geringer-Sameth A."/>
            <person name="Goldsberry C."/>
            <person name="Morozov P."/>
            <person name="Fischer S.G."/>
            <person name="Segal G."/>
            <person name="Qu X."/>
            <person name="Rzhetsky A."/>
            <person name="Zhang P."/>
            <person name="Cayanis E."/>
            <person name="De Jong P.J."/>
            <person name="Ju J."/>
            <person name="Kalachikov S."/>
            <person name="Shuman H.A."/>
            <person name="Russo J.J."/>
        </authorList>
    </citation>
    <scope>NUCLEOTIDE SEQUENCE [LARGE SCALE GENOMIC DNA]</scope>
    <source>
        <strain>Philadelphia 1 / ATCC 33152 / DSM 7513</strain>
    </source>
</reference>
<comment type="function">
    <text evidence="1">Catalyzes the reversible reaction in which hydroxymethyl group from 5,10-methylenetetrahydrofolate is transferred onto alpha-ketoisovalerate to form ketopantoate.</text>
</comment>
<comment type="catalytic activity">
    <reaction evidence="1">
        <text>3-methyl-2-oxobutanoate + (6R)-5,10-methylene-5,6,7,8-tetrahydrofolate + H2O = 2-dehydropantoate + (6S)-5,6,7,8-tetrahydrofolate</text>
        <dbReference type="Rhea" id="RHEA:11824"/>
        <dbReference type="ChEBI" id="CHEBI:11561"/>
        <dbReference type="ChEBI" id="CHEBI:11851"/>
        <dbReference type="ChEBI" id="CHEBI:15377"/>
        <dbReference type="ChEBI" id="CHEBI:15636"/>
        <dbReference type="ChEBI" id="CHEBI:57453"/>
        <dbReference type="EC" id="2.1.2.11"/>
    </reaction>
</comment>
<comment type="cofactor">
    <cofactor evidence="1">
        <name>Mg(2+)</name>
        <dbReference type="ChEBI" id="CHEBI:18420"/>
    </cofactor>
    <text evidence="1">Binds 1 Mg(2+) ion per subunit.</text>
</comment>
<comment type="pathway">
    <text evidence="1">Cofactor biosynthesis; (R)-pantothenate biosynthesis; (R)-pantoate from 3-methyl-2-oxobutanoate: step 1/2.</text>
</comment>
<comment type="subunit">
    <text evidence="1">Homodecamer; pentamer of dimers.</text>
</comment>
<comment type="subcellular location">
    <subcellularLocation>
        <location evidence="1">Cytoplasm</location>
    </subcellularLocation>
</comment>
<comment type="similarity">
    <text evidence="1">Belongs to the PanB family.</text>
</comment>
<comment type="sequence caution" evidence="2">
    <conflict type="erroneous initiation">
        <sequence resource="EMBL-CDS" id="AAU28719"/>
    </conflict>
</comment>
<accession>Q5ZS58</accession>
<protein>
    <recommendedName>
        <fullName evidence="1">3-methyl-2-oxobutanoate hydroxymethyltransferase</fullName>
        <ecNumber evidence="1">2.1.2.11</ecNumber>
    </recommendedName>
    <alternativeName>
        <fullName evidence="1">Ketopantoate hydroxymethyltransferase</fullName>
        <shortName evidence="1">KPHMT</shortName>
    </alternativeName>
</protein>
<name>PANB_LEGPH</name>
<proteinExistence type="inferred from homology"/>
<evidence type="ECO:0000255" key="1">
    <source>
        <dbReference type="HAMAP-Rule" id="MF_00156"/>
    </source>
</evidence>
<evidence type="ECO:0000305" key="2"/>
<organism>
    <name type="scientific">Legionella pneumophila subsp. pneumophila (strain Philadelphia 1 / ATCC 33152 / DSM 7513)</name>
    <dbReference type="NCBI Taxonomy" id="272624"/>
    <lineage>
        <taxon>Bacteria</taxon>
        <taxon>Pseudomonadati</taxon>
        <taxon>Pseudomonadota</taxon>
        <taxon>Gammaproteobacteria</taxon>
        <taxon>Legionellales</taxon>
        <taxon>Legionellaceae</taxon>
        <taxon>Legionella</taxon>
    </lineage>
</organism>
<feature type="chain" id="PRO_0000184853" description="3-methyl-2-oxobutanoate hydroxymethyltransferase">
    <location>
        <begin position="1"/>
        <end position="262"/>
    </location>
</feature>
<feature type="active site" description="Proton acceptor" evidence="1">
    <location>
        <position position="180"/>
    </location>
</feature>
<feature type="binding site" evidence="1">
    <location>
        <begin position="42"/>
        <end position="43"/>
    </location>
    <ligand>
        <name>3-methyl-2-oxobutanoate</name>
        <dbReference type="ChEBI" id="CHEBI:11851"/>
    </ligand>
</feature>
<feature type="binding site" evidence="1">
    <location>
        <position position="42"/>
    </location>
    <ligand>
        <name>Mg(2+)</name>
        <dbReference type="ChEBI" id="CHEBI:18420"/>
    </ligand>
</feature>
<feature type="binding site" evidence="1">
    <location>
        <position position="81"/>
    </location>
    <ligand>
        <name>3-methyl-2-oxobutanoate</name>
        <dbReference type="ChEBI" id="CHEBI:11851"/>
    </ligand>
</feature>
<feature type="binding site" evidence="1">
    <location>
        <position position="81"/>
    </location>
    <ligand>
        <name>Mg(2+)</name>
        <dbReference type="ChEBI" id="CHEBI:18420"/>
    </ligand>
</feature>
<feature type="binding site" evidence="1">
    <location>
        <position position="110"/>
    </location>
    <ligand>
        <name>3-methyl-2-oxobutanoate</name>
        <dbReference type="ChEBI" id="CHEBI:11851"/>
    </ligand>
</feature>
<feature type="binding site" evidence="1">
    <location>
        <position position="112"/>
    </location>
    <ligand>
        <name>Mg(2+)</name>
        <dbReference type="ChEBI" id="CHEBI:18420"/>
    </ligand>
</feature>
<sequence>MKIHDFKIKKQEQKKISMLTCYDYPSACIVAESNIDCVLVGDSVAMAVHGHPTTIMATIEMMELHTQAVARGLGKQFLITDLPFLGHKSSQGHTVENVKRLLQAGAQAVKIEGADKDTCQTISHLVNAGIPVMGHIGLTPQSIHQLGGYKVQGKNSEQAETLLQQAATLEQAGCFAVVIECVPQELAKTITDSLVIPTIGIGAGPGTDGQVLVWHDMLGLQTSFNPKFVKKYFRAKDHFIEALNSYVQQVQQMHFPANEHSF</sequence>